<comment type="function">
    <text evidence="1">Part of the ABC transporter complex MetNIQ involved in methionine import. Responsible for energy coupling to the transport system.</text>
</comment>
<comment type="catalytic activity">
    <reaction evidence="1">
        <text>L-methionine(out) + ATP + H2O = L-methionine(in) + ADP + phosphate + H(+)</text>
        <dbReference type="Rhea" id="RHEA:29779"/>
        <dbReference type="ChEBI" id="CHEBI:15377"/>
        <dbReference type="ChEBI" id="CHEBI:15378"/>
        <dbReference type="ChEBI" id="CHEBI:30616"/>
        <dbReference type="ChEBI" id="CHEBI:43474"/>
        <dbReference type="ChEBI" id="CHEBI:57844"/>
        <dbReference type="ChEBI" id="CHEBI:456216"/>
        <dbReference type="EC" id="7.4.2.11"/>
    </reaction>
</comment>
<comment type="catalytic activity">
    <reaction evidence="1">
        <text>D-methionine(out) + ATP + H2O = D-methionine(in) + ADP + phosphate + H(+)</text>
        <dbReference type="Rhea" id="RHEA:29767"/>
        <dbReference type="ChEBI" id="CHEBI:15377"/>
        <dbReference type="ChEBI" id="CHEBI:15378"/>
        <dbReference type="ChEBI" id="CHEBI:30616"/>
        <dbReference type="ChEBI" id="CHEBI:43474"/>
        <dbReference type="ChEBI" id="CHEBI:57932"/>
        <dbReference type="ChEBI" id="CHEBI:456216"/>
        <dbReference type="EC" id="7.4.2.11"/>
    </reaction>
</comment>
<comment type="subunit">
    <text evidence="1">The complex is composed of two ATP-binding proteins (MetN), two transmembrane proteins (MetI) and a solute-binding protein (MetQ).</text>
</comment>
<comment type="subcellular location">
    <subcellularLocation>
        <location evidence="1">Cell membrane</location>
        <topology evidence="1">Peripheral membrane protein</topology>
    </subcellularLocation>
</comment>
<comment type="similarity">
    <text evidence="1">Belongs to the ABC transporter superfamily. Methionine importer (TC 3.A.1.24) family.</text>
</comment>
<proteinExistence type="inferred from homology"/>
<protein>
    <recommendedName>
        <fullName evidence="1">Methionine import ATP-binding protein MetN</fullName>
        <ecNumber evidence="1">7.4.2.11</ecNumber>
    </recommendedName>
</protein>
<sequence>MNEAIIQLDHIDITFRQKKRVIEAVKDVTVHINQGDIYGIVGYSGAGKSTLVRVINLLQAPTNGKITVDGDVTFEQGKVQLSANALRQKRRDIGMIFQHFNLMAQKTAKENVAFALRHSSLSKTEKEHKVIELLELVGLSERADNYPAQLSGGQKQRVAIARALANDPKILISDEATSALDPKTTKQILALLQELNRKLGLTIVMITHEMQIVKDICNRVAVMQNGVLIEEGSVLDIFSNPKEALTQEFITTATGIDEALEKINQQDIVKHLPANALLAQLKYAGTSTDEPLLNSIYRQFEVTANILYGNIEILDHIPVGDMIVVLEGQAENILAAEKALHEAGVDVSILKRGA</sequence>
<organism>
    <name type="scientific">Streptococcus pyogenes serotype M3 (strain SSI-1)</name>
    <dbReference type="NCBI Taxonomy" id="193567"/>
    <lineage>
        <taxon>Bacteria</taxon>
        <taxon>Bacillati</taxon>
        <taxon>Bacillota</taxon>
        <taxon>Bacilli</taxon>
        <taxon>Lactobacillales</taxon>
        <taxon>Streptococcaceae</taxon>
        <taxon>Streptococcus</taxon>
    </lineage>
</organism>
<feature type="chain" id="PRO_0000411253" description="Methionine import ATP-binding protein MetN">
    <location>
        <begin position="1"/>
        <end position="354"/>
    </location>
</feature>
<feature type="domain" description="ABC transporter" evidence="1">
    <location>
        <begin position="8"/>
        <end position="250"/>
    </location>
</feature>
<feature type="binding site" evidence="1">
    <location>
        <begin position="42"/>
        <end position="49"/>
    </location>
    <ligand>
        <name>ATP</name>
        <dbReference type="ChEBI" id="CHEBI:30616"/>
    </ligand>
</feature>
<gene>
    <name evidence="1" type="primary">metN</name>
    <name type="ordered locus">SPs1625</name>
</gene>
<accession>P0CZ31</accession>
<accession>Q79WB7</accession>
<accession>Q8K8K8</accession>
<reference key="1">
    <citation type="journal article" date="2003" name="Genome Res.">
        <title>Genome sequence of an M3 strain of Streptococcus pyogenes reveals a large-scale genomic rearrangement in invasive strains and new insights into phage evolution.</title>
        <authorList>
            <person name="Nakagawa I."/>
            <person name="Kurokawa K."/>
            <person name="Yamashita A."/>
            <person name="Nakata M."/>
            <person name="Tomiyasu Y."/>
            <person name="Okahashi N."/>
            <person name="Kawabata S."/>
            <person name="Yamazaki K."/>
            <person name="Shiba T."/>
            <person name="Yasunaga T."/>
            <person name="Hayashi H."/>
            <person name="Hattori M."/>
            <person name="Hamada S."/>
        </authorList>
    </citation>
    <scope>NUCLEOTIDE SEQUENCE [LARGE SCALE GENOMIC DNA]</scope>
    <source>
        <strain>SSI-1</strain>
    </source>
</reference>
<evidence type="ECO:0000255" key="1">
    <source>
        <dbReference type="HAMAP-Rule" id="MF_01719"/>
    </source>
</evidence>
<keyword id="KW-0029">Amino-acid transport</keyword>
<keyword id="KW-0067">ATP-binding</keyword>
<keyword id="KW-1003">Cell membrane</keyword>
<keyword id="KW-0472">Membrane</keyword>
<keyword id="KW-0547">Nucleotide-binding</keyword>
<keyword id="KW-1278">Translocase</keyword>
<keyword id="KW-0813">Transport</keyword>
<name>METN_STRPQ</name>
<dbReference type="EC" id="7.4.2.11" evidence="1"/>
<dbReference type="EMBL" id="BA000034">
    <property type="protein sequence ID" value="BAC64720.1"/>
    <property type="molecule type" value="Genomic_DNA"/>
</dbReference>
<dbReference type="RefSeq" id="WP_011054194.1">
    <property type="nucleotide sequence ID" value="NC_004606.1"/>
</dbReference>
<dbReference type="SMR" id="P0CZ31"/>
<dbReference type="KEGG" id="sps:SPs1625"/>
<dbReference type="HOGENOM" id="CLU_000604_1_3_9"/>
<dbReference type="GO" id="GO:0005886">
    <property type="term" value="C:plasma membrane"/>
    <property type="evidence" value="ECO:0007669"/>
    <property type="project" value="UniProtKB-SubCell"/>
</dbReference>
<dbReference type="GO" id="GO:0033232">
    <property type="term" value="F:ABC-type D-methionine transporter activity"/>
    <property type="evidence" value="ECO:0007669"/>
    <property type="project" value="UniProtKB-EC"/>
</dbReference>
<dbReference type="GO" id="GO:0005524">
    <property type="term" value="F:ATP binding"/>
    <property type="evidence" value="ECO:0007669"/>
    <property type="project" value="UniProtKB-KW"/>
</dbReference>
<dbReference type="GO" id="GO:0016887">
    <property type="term" value="F:ATP hydrolysis activity"/>
    <property type="evidence" value="ECO:0007669"/>
    <property type="project" value="InterPro"/>
</dbReference>
<dbReference type="CDD" id="cd03258">
    <property type="entry name" value="ABC_MetN_methionine_transporter"/>
    <property type="match status" value="1"/>
</dbReference>
<dbReference type="Gene3D" id="3.30.70.260">
    <property type="match status" value="1"/>
</dbReference>
<dbReference type="Gene3D" id="3.40.50.300">
    <property type="entry name" value="P-loop containing nucleotide triphosphate hydrolases"/>
    <property type="match status" value="1"/>
</dbReference>
<dbReference type="InterPro" id="IPR003593">
    <property type="entry name" value="AAA+_ATPase"/>
</dbReference>
<dbReference type="InterPro" id="IPR003439">
    <property type="entry name" value="ABC_transporter-like_ATP-bd"/>
</dbReference>
<dbReference type="InterPro" id="IPR017871">
    <property type="entry name" value="ABC_transporter-like_CS"/>
</dbReference>
<dbReference type="InterPro" id="IPR045865">
    <property type="entry name" value="ACT-like_dom_sf"/>
</dbReference>
<dbReference type="InterPro" id="IPR041701">
    <property type="entry name" value="MetN_ABC"/>
</dbReference>
<dbReference type="InterPro" id="IPR050086">
    <property type="entry name" value="MetN_ABC_transporter-like"/>
</dbReference>
<dbReference type="InterPro" id="IPR018449">
    <property type="entry name" value="NIL_domain"/>
</dbReference>
<dbReference type="InterPro" id="IPR027417">
    <property type="entry name" value="P-loop_NTPase"/>
</dbReference>
<dbReference type="PANTHER" id="PTHR43166">
    <property type="entry name" value="AMINO ACID IMPORT ATP-BINDING PROTEIN"/>
    <property type="match status" value="1"/>
</dbReference>
<dbReference type="PANTHER" id="PTHR43166:SF30">
    <property type="entry name" value="METHIONINE IMPORT ATP-BINDING PROTEIN METN"/>
    <property type="match status" value="1"/>
</dbReference>
<dbReference type="Pfam" id="PF00005">
    <property type="entry name" value="ABC_tran"/>
    <property type="match status" value="1"/>
</dbReference>
<dbReference type="Pfam" id="PF09383">
    <property type="entry name" value="NIL"/>
    <property type="match status" value="1"/>
</dbReference>
<dbReference type="SMART" id="SM00382">
    <property type="entry name" value="AAA"/>
    <property type="match status" value="1"/>
</dbReference>
<dbReference type="SMART" id="SM00930">
    <property type="entry name" value="NIL"/>
    <property type="match status" value="1"/>
</dbReference>
<dbReference type="SUPFAM" id="SSF55021">
    <property type="entry name" value="ACT-like"/>
    <property type="match status" value="1"/>
</dbReference>
<dbReference type="SUPFAM" id="SSF52540">
    <property type="entry name" value="P-loop containing nucleoside triphosphate hydrolases"/>
    <property type="match status" value="1"/>
</dbReference>
<dbReference type="PROSITE" id="PS00211">
    <property type="entry name" value="ABC_TRANSPORTER_1"/>
    <property type="match status" value="1"/>
</dbReference>
<dbReference type="PROSITE" id="PS50893">
    <property type="entry name" value="ABC_TRANSPORTER_2"/>
    <property type="match status" value="1"/>
</dbReference>
<dbReference type="PROSITE" id="PS51264">
    <property type="entry name" value="METN"/>
    <property type="match status" value="1"/>
</dbReference>